<reference key="1">
    <citation type="journal article" date="2005" name="Nucleic Acids Res.">
        <title>Genome dynamics and diversity of Shigella species, the etiologic agents of bacillary dysentery.</title>
        <authorList>
            <person name="Yang F."/>
            <person name="Yang J."/>
            <person name="Zhang X."/>
            <person name="Chen L."/>
            <person name="Jiang Y."/>
            <person name="Yan Y."/>
            <person name="Tang X."/>
            <person name="Wang J."/>
            <person name="Xiong Z."/>
            <person name="Dong J."/>
            <person name="Xue Y."/>
            <person name="Zhu Y."/>
            <person name="Xu X."/>
            <person name="Sun L."/>
            <person name="Chen S."/>
            <person name="Nie H."/>
            <person name="Peng J."/>
            <person name="Xu J."/>
            <person name="Wang Y."/>
            <person name="Yuan Z."/>
            <person name="Wen Y."/>
            <person name="Yao Z."/>
            <person name="Shen Y."/>
            <person name="Qiang B."/>
            <person name="Hou Y."/>
            <person name="Yu J."/>
            <person name="Jin Q."/>
        </authorList>
    </citation>
    <scope>NUCLEOTIDE SEQUENCE [LARGE SCALE GENOMIC DNA]</scope>
    <source>
        <strain>Sb227</strain>
    </source>
</reference>
<gene>
    <name evidence="1" type="primary">nuoB</name>
    <name type="ordered locus">SBO_2320</name>
</gene>
<name>NUOB_SHIBS</name>
<keyword id="KW-0004">4Fe-4S</keyword>
<keyword id="KW-0997">Cell inner membrane</keyword>
<keyword id="KW-1003">Cell membrane</keyword>
<keyword id="KW-0408">Iron</keyword>
<keyword id="KW-0411">Iron-sulfur</keyword>
<keyword id="KW-0472">Membrane</keyword>
<keyword id="KW-0479">Metal-binding</keyword>
<keyword id="KW-0520">NAD</keyword>
<keyword id="KW-0874">Quinone</keyword>
<keyword id="KW-1278">Translocase</keyword>
<keyword id="KW-0813">Transport</keyword>
<keyword id="KW-0830">Ubiquinone</keyword>
<protein>
    <recommendedName>
        <fullName evidence="1">NADH-quinone oxidoreductase subunit B</fullName>
        <ecNumber evidence="1">7.1.1.-</ecNumber>
    </recommendedName>
    <alternativeName>
        <fullName evidence="1">NADH dehydrogenase I subunit B</fullName>
    </alternativeName>
    <alternativeName>
        <fullName evidence="1">NDH-1 subunit B</fullName>
    </alternativeName>
</protein>
<dbReference type="EC" id="7.1.1.-" evidence="1"/>
<dbReference type="EMBL" id="CP000036">
    <property type="protein sequence ID" value="ABB66884.1"/>
    <property type="molecule type" value="Genomic_DNA"/>
</dbReference>
<dbReference type="RefSeq" id="WP_000386733.1">
    <property type="nucleotide sequence ID" value="NC_007613.1"/>
</dbReference>
<dbReference type="SMR" id="Q31YH4"/>
<dbReference type="GeneID" id="93774887"/>
<dbReference type="KEGG" id="sbo:SBO_2320"/>
<dbReference type="HOGENOM" id="CLU_055737_7_3_6"/>
<dbReference type="Proteomes" id="UP000007067">
    <property type="component" value="Chromosome"/>
</dbReference>
<dbReference type="GO" id="GO:0005886">
    <property type="term" value="C:plasma membrane"/>
    <property type="evidence" value="ECO:0007669"/>
    <property type="project" value="UniProtKB-SubCell"/>
</dbReference>
<dbReference type="GO" id="GO:0045271">
    <property type="term" value="C:respiratory chain complex I"/>
    <property type="evidence" value="ECO:0007669"/>
    <property type="project" value="TreeGrafter"/>
</dbReference>
<dbReference type="GO" id="GO:0051539">
    <property type="term" value="F:4 iron, 4 sulfur cluster binding"/>
    <property type="evidence" value="ECO:0007669"/>
    <property type="project" value="UniProtKB-KW"/>
</dbReference>
<dbReference type="GO" id="GO:0005506">
    <property type="term" value="F:iron ion binding"/>
    <property type="evidence" value="ECO:0007669"/>
    <property type="project" value="UniProtKB-UniRule"/>
</dbReference>
<dbReference type="GO" id="GO:0008137">
    <property type="term" value="F:NADH dehydrogenase (ubiquinone) activity"/>
    <property type="evidence" value="ECO:0007669"/>
    <property type="project" value="InterPro"/>
</dbReference>
<dbReference type="GO" id="GO:0050136">
    <property type="term" value="F:NADH:ubiquinone reductase (non-electrogenic) activity"/>
    <property type="evidence" value="ECO:0007669"/>
    <property type="project" value="UniProtKB-UniRule"/>
</dbReference>
<dbReference type="GO" id="GO:0048038">
    <property type="term" value="F:quinone binding"/>
    <property type="evidence" value="ECO:0007669"/>
    <property type="project" value="UniProtKB-KW"/>
</dbReference>
<dbReference type="GO" id="GO:0009060">
    <property type="term" value="P:aerobic respiration"/>
    <property type="evidence" value="ECO:0007669"/>
    <property type="project" value="TreeGrafter"/>
</dbReference>
<dbReference type="GO" id="GO:0015990">
    <property type="term" value="P:electron transport coupled proton transport"/>
    <property type="evidence" value="ECO:0007669"/>
    <property type="project" value="TreeGrafter"/>
</dbReference>
<dbReference type="FunFam" id="3.40.50.12280:FF:000002">
    <property type="entry name" value="NADH-quinone oxidoreductase subunit B"/>
    <property type="match status" value="1"/>
</dbReference>
<dbReference type="Gene3D" id="3.40.50.12280">
    <property type="match status" value="1"/>
</dbReference>
<dbReference type="HAMAP" id="MF_01356">
    <property type="entry name" value="NDH1_NuoB"/>
    <property type="match status" value="1"/>
</dbReference>
<dbReference type="InterPro" id="IPR006137">
    <property type="entry name" value="NADH_UbQ_OxRdtase-like_20kDa"/>
</dbReference>
<dbReference type="InterPro" id="IPR006138">
    <property type="entry name" value="NADH_UQ_OxRdtase_20Kd_su"/>
</dbReference>
<dbReference type="NCBIfam" id="TIGR01957">
    <property type="entry name" value="nuoB_fam"/>
    <property type="match status" value="1"/>
</dbReference>
<dbReference type="NCBIfam" id="NF005012">
    <property type="entry name" value="PRK06411.1"/>
    <property type="match status" value="1"/>
</dbReference>
<dbReference type="PANTHER" id="PTHR11995">
    <property type="entry name" value="NADH DEHYDROGENASE"/>
    <property type="match status" value="1"/>
</dbReference>
<dbReference type="PANTHER" id="PTHR11995:SF14">
    <property type="entry name" value="NADH DEHYDROGENASE [UBIQUINONE] IRON-SULFUR PROTEIN 7, MITOCHONDRIAL"/>
    <property type="match status" value="1"/>
</dbReference>
<dbReference type="Pfam" id="PF01058">
    <property type="entry name" value="Oxidored_q6"/>
    <property type="match status" value="1"/>
</dbReference>
<dbReference type="SUPFAM" id="SSF56770">
    <property type="entry name" value="HydA/Nqo6-like"/>
    <property type="match status" value="1"/>
</dbReference>
<dbReference type="PROSITE" id="PS01150">
    <property type="entry name" value="COMPLEX1_20K"/>
    <property type="match status" value="1"/>
</dbReference>
<comment type="function">
    <text evidence="1">NDH-1 shuttles electrons from NADH, via FMN and iron-sulfur (Fe-S) centers, to quinones in the respiratory chain. The immediate electron acceptor for the enzyme in this species is believed to be ubiquinone. Couples the redox reaction to proton translocation (for every two electrons transferred, four hydrogen ions are translocated across the cytoplasmic membrane), and thus conserves the redox energy in a proton gradient.</text>
</comment>
<comment type="catalytic activity">
    <reaction evidence="1">
        <text>a quinone + NADH + 5 H(+)(in) = a quinol + NAD(+) + 4 H(+)(out)</text>
        <dbReference type="Rhea" id="RHEA:57888"/>
        <dbReference type="ChEBI" id="CHEBI:15378"/>
        <dbReference type="ChEBI" id="CHEBI:24646"/>
        <dbReference type="ChEBI" id="CHEBI:57540"/>
        <dbReference type="ChEBI" id="CHEBI:57945"/>
        <dbReference type="ChEBI" id="CHEBI:132124"/>
    </reaction>
</comment>
<comment type="cofactor">
    <cofactor evidence="1">
        <name>[4Fe-4S] cluster</name>
        <dbReference type="ChEBI" id="CHEBI:49883"/>
    </cofactor>
    <text evidence="1">Binds 1 [4Fe-4S] cluster.</text>
</comment>
<comment type="subunit">
    <text evidence="1">NDH-1 is composed of 13 different subunits. Subunits NuoB, CD, E, F, and G constitute the peripheral sector of the complex.</text>
</comment>
<comment type="subcellular location">
    <subcellularLocation>
        <location evidence="1">Cell inner membrane</location>
        <topology evidence="1">Peripheral membrane protein</topology>
        <orientation evidence="1">Cytoplasmic side</orientation>
    </subcellularLocation>
</comment>
<comment type="similarity">
    <text evidence="1">Belongs to the complex I 20 kDa subunit family.</text>
</comment>
<evidence type="ECO:0000255" key="1">
    <source>
        <dbReference type="HAMAP-Rule" id="MF_01356"/>
    </source>
</evidence>
<feature type="chain" id="PRO_0000376376" description="NADH-quinone oxidoreductase subunit B">
    <location>
        <begin position="1"/>
        <end position="220"/>
    </location>
</feature>
<feature type="binding site" evidence="1">
    <location>
        <position position="63"/>
    </location>
    <ligand>
        <name>[4Fe-4S] cluster</name>
        <dbReference type="ChEBI" id="CHEBI:49883"/>
    </ligand>
</feature>
<feature type="binding site" evidence="1">
    <location>
        <position position="64"/>
    </location>
    <ligand>
        <name>[4Fe-4S] cluster</name>
        <dbReference type="ChEBI" id="CHEBI:49883"/>
    </ligand>
</feature>
<feature type="binding site" evidence="1">
    <location>
        <position position="129"/>
    </location>
    <ligand>
        <name>[4Fe-4S] cluster</name>
        <dbReference type="ChEBI" id="CHEBI:49883"/>
    </ligand>
</feature>
<feature type="binding site" evidence="1">
    <location>
        <position position="158"/>
    </location>
    <ligand>
        <name>[4Fe-4S] cluster</name>
        <dbReference type="ChEBI" id="CHEBI:49883"/>
    </ligand>
</feature>
<accession>Q31YH4</accession>
<sequence>MDYTLTRIDPNGENDRYPLQKQEIVTDPLEQEVNKNVFMGKLNDMVNWGRKNSIWPYNFGLSCCYVEMVTSFTAVHDVARFGAEVLRASPRQADLMVVAGTCFTKMAPVIQRLYDQMLEPKWVISMGACANSGGMYDIYSVVQGVDKFIPVDVYIPGCPPRPEAYMQALMLLQESIGKERRPLSWVVGDQGVYRANMQSERERKRGERIAVTNLRTPDEI</sequence>
<organism>
    <name type="scientific">Shigella boydii serotype 4 (strain Sb227)</name>
    <dbReference type="NCBI Taxonomy" id="300268"/>
    <lineage>
        <taxon>Bacteria</taxon>
        <taxon>Pseudomonadati</taxon>
        <taxon>Pseudomonadota</taxon>
        <taxon>Gammaproteobacteria</taxon>
        <taxon>Enterobacterales</taxon>
        <taxon>Enterobacteriaceae</taxon>
        <taxon>Shigella</taxon>
    </lineage>
</organism>
<proteinExistence type="inferred from homology"/>